<name>PPK4_PACBA</name>
<comment type="function">
    <text evidence="1">Myoactive.</text>
</comment>
<comment type="subcellular location">
    <subcellularLocation>
        <location evidence="6">Secreted</location>
    </subcellularLocation>
</comment>
<comment type="similarity">
    <text evidence="2">Belongs to the pyrokinin family.</text>
</comment>
<keyword id="KW-0027">Amidation</keyword>
<keyword id="KW-0903">Direct protein sequencing</keyword>
<keyword id="KW-0527">Neuropeptide</keyword>
<keyword id="KW-0964">Secreted</keyword>
<evidence type="ECO:0000250" key="1">
    <source>
        <dbReference type="UniProtKB" id="P82619"/>
    </source>
</evidence>
<evidence type="ECO:0000255" key="2"/>
<evidence type="ECO:0000269" key="3">
    <source>
    </source>
</evidence>
<evidence type="ECO:0000303" key="4">
    <source>
    </source>
</evidence>
<evidence type="ECO:0000305" key="5"/>
<evidence type="ECO:0000305" key="6">
    <source>
    </source>
</evidence>
<proteinExistence type="evidence at protein level"/>
<feature type="peptide" id="PRO_0000421607" description="Pyrokinin-4" evidence="3">
    <location>
        <begin position="1"/>
        <end position="14"/>
    </location>
</feature>
<feature type="modified residue" description="Glycine amide" evidence="3">
    <location>
        <position position="14"/>
    </location>
</feature>
<sequence length="14" mass="1592">AELPQGLWVRPRLG</sequence>
<protein>
    <recommendedName>
        <fullName evidence="4">Pyrokinin-4</fullName>
        <shortName evidence="4">PK-4</shortName>
    </recommendedName>
</protein>
<dbReference type="GO" id="GO:0005576">
    <property type="term" value="C:extracellular region"/>
    <property type="evidence" value="ECO:0007669"/>
    <property type="project" value="UniProtKB-SubCell"/>
</dbReference>
<dbReference type="GO" id="GO:0007218">
    <property type="term" value="P:neuropeptide signaling pathway"/>
    <property type="evidence" value="ECO:0007669"/>
    <property type="project" value="UniProtKB-KW"/>
</dbReference>
<accession>B3A0K8</accession>
<reference evidence="5" key="1">
    <citation type="journal article" date="2012" name="Syst. Biol.">
        <title>Peptidomics-based phylogeny and biogeography of Mantophasmatodea (Hexapoda).</title>
        <authorList>
            <person name="Predel R."/>
            <person name="Neupert S."/>
            <person name="Huetteroth W."/>
            <person name="Kahnt J."/>
            <person name="Waidelich D."/>
            <person name="Roth S."/>
        </authorList>
    </citation>
    <scope>PROTEIN SEQUENCE</scope>
    <scope>AMIDATION AT GLY-14</scope>
    <source>
        <tissue evidence="3">Corpora cardiaca</tissue>
    </source>
</reference>
<organism>
    <name type="scientific">Pachyphasma brandbergense</name>
    <name type="common">Gladiator</name>
    <name type="synonym">Heel-walker</name>
    <dbReference type="NCBI Taxonomy" id="1041430"/>
    <lineage>
        <taxon>Eukaryota</taxon>
        <taxon>Metazoa</taxon>
        <taxon>Ecdysozoa</taxon>
        <taxon>Arthropoda</taxon>
        <taxon>Hexapoda</taxon>
        <taxon>Insecta</taxon>
        <taxon>Pterygota</taxon>
        <taxon>Neoptera</taxon>
        <taxon>Polyneoptera</taxon>
        <taxon>Mantophasmatodea</taxon>
        <taxon>Mantophasmatidae</taxon>
        <taxon>Pachyphasma</taxon>
    </lineage>
</organism>